<organismHost>
    <name type="scientific">Pan troglodytes</name>
    <name type="common">Chimpanzee</name>
    <dbReference type="NCBI Taxonomy" id="9598"/>
</organismHost>
<feature type="chain" id="PRO_0000248290" description="Virion infectivity factor" evidence="1">
    <location>
        <begin position="1"/>
        <end position="192"/>
    </location>
</feature>
<feature type="chain" id="PRO_0000248291" description="p17" evidence="1">
    <location>
        <begin position="1"/>
        <end position="150"/>
    </location>
</feature>
<feature type="chain" id="PRO_0000248292" description="p7" evidence="1">
    <location>
        <begin position="151"/>
        <end position="192"/>
    </location>
</feature>
<feature type="region of interest" description="Interaction with host APOBEC3F; F1-box" evidence="1">
    <location>
        <begin position="14"/>
        <end position="17"/>
    </location>
</feature>
<feature type="region of interest" description="Interaction with host APOBEC3G; G-box" evidence="1">
    <location>
        <begin position="40"/>
        <end position="44"/>
    </location>
</feature>
<feature type="region of interest" description="Interaction with host APOBEC3F and APOBEC3G; FG-box" evidence="1">
    <location>
        <begin position="54"/>
        <end position="72"/>
    </location>
</feature>
<feature type="region of interest" description="Interaction with host APOBEC3F; F2-box" evidence="1">
    <location>
        <begin position="74"/>
        <end position="79"/>
    </location>
</feature>
<feature type="region of interest" description="RNA-binding" evidence="1">
    <location>
        <begin position="75"/>
        <end position="114"/>
    </location>
</feature>
<feature type="region of interest" description="SOCS box-like" evidence="1">
    <location>
        <begin position="151"/>
        <end position="180"/>
    </location>
</feature>
<feature type="region of interest" description="Multimerization" evidence="1">
    <location>
        <begin position="151"/>
        <end position="164"/>
    </location>
</feature>
<feature type="region of interest" description="Disordered" evidence="2">
    <location>
        <begin position="158"/>
        <end position="192"/>
    </location>
</feature>
<feature type="region of interest" description="Membrane association" evidence="1">
    <location>
        <begin position="171"/>
        <end position="172"/>
    </location>
</feature>
<feature type="short sequence motif" description="HCCH motif" evidence="1">
    <location>
        <begin position="108"/>
        <end position="139"/>
    </location>
</feature>
<feature type="short sequence motif" description="BC-box-like motif" evidence="1">
    <location>
        <begin position="144"/>
        <end position="153"/>
    </location>
</feature>
<feature type="compositionally biased region" description="Basic and acidic residues" evidence="2">
    <location>
        <begin position="168"/>
        <end position="185"/>
    </location>
</feature>
<feature type="binding site" evidence="1">
    <location>
        <position position="108"/>
    </location>
    <ligand>
        <name>Zn(2+)</name>
        <dbReference type="ChEBI" id="CHEBI:29105"/>
    </ligand>
</feature>
<feature type="binding site" evidence="1">
    <location>
        <position position="114"/>
    </location>
    <ligand>
        <name>Zn(2+)</name>
        <dbReference type="ChEBI" id="CHEBI:29105"/>
    </ligand>
</feature>
<feature type="binding site" evidence="1">
    <location>
        <position position="133"/>
    </location>
    <ligand>
        <name>Zn(2+)</name>
        <dbReference type="ChEBI" id="CHEBI:29105"/>
    </ligand>
</feature>
<feature type="binding site" evidence="1">
    <location>
        <position position="139"/>
    </location>
    <ligand>
        <name>Zn(2+)</name>
        <dbReference type="ChEBI" id="CHEBI:29105"/>
    </ligand>
</feature>
<feature type="site" description="Cleavage in virion (by viral protease)" evidence="1">
    <location>
        <begin position="150"/>
        <end position="151"/>
    </location>
</feature>
<feature type="modified residue" description="Phosphothreonine; by host MAP4K1" evidence="1">
    <location>
        <position position="96"/>
    </location>
</feature>
<feature type="modified residue" description="Phosphoserine; by host" evidence="1">
    <location>
        <position position="144"/>
    </location>
</feature>
<feature type="modified residue" description="Phosphoserine; by host MAP4K1" evidence="1">
    <location>
        <position position="165"/>
    </location>
</feature>
<protein>
    <recommendedName>
        <fullName evidence="1">Virion infectivity factor</fullName>
        <shortName evidence="1">Vif</shortName>
    </recommendedName>
    <alternativeName>
        <fullName evidence="1">SOR protein</fullName>
    </alternativeName>
    <component>
        <recommendedName>
            <fullName evidence="1">p17</fullName>
        </recommendedName>
    </component>
    <component>
        <recommendedName>
            <fullName evidence="1">p7</fullName>
        </recommendedName>
    </component>
</protein>
<reference key="1">
    <citation type="journal article" date="2006" name="Science">
        <title>Chimpanzee reservoirs of pandemic and nonpandemic HIV-1.</title>
        <authorList>
            <person name="Keele B.F."/>
            <person name="Van Heuverswyn F."/>
            <person name="Li Y."/>
            <person name="Bailes E."/>
            <person name="Takehisa J."/>
            <person name="Santiago M.L."/>
            <person name="Bibollet-Ruche F."/>
            <person name="Chen Y."/>
            <person name="Wain L.V."/>
            <person name="Liegeois F."/>
            <person name="Loul S."/>
            <person name="Ngole E.M."/>
            <person name="Bienvenue Y."/>
            <person name="Delaporte E."/>
            <person name="Brookfield J.F."/>
            <person name="Sharp P.M."/>
            <person name="Shaw G.M."/>
            <person name="Peeters M."/>
            <person name="Hahn B.H."/>
        </authorList>
    </citation>
    <scope>NUCLEOTIDE SEQUENCE [GENOMIC RNA]</scope>
</reference>
<dbReference type="EMBL" id="DQ373063">
    <property type="protein sequence ID" value="ABD19476.1"/>
    <property type="molecule type" value="Genomic_RNA"/>
</dbReference>
<dbReference type="SMR" id="Q1A266"/>
<dbReference type="Proteomes" id="UP000009152">
    <property type="component" value="Segment"/>
</dbReference>
<dbReference type="GO" id="GO:0030430">
    <property type="term" value="C:host cell cytoplasm"/>
    <property type="evidence" value="ECO:0007669"/>
    <property type="project" value="UniProtKB-SubCell"/>
</dbReference>
<dbReference type="GO" id="GO:0020002">
    <property type="term" value="C:host cell plasma membrane"/>
    <property type="evidence" value="ECO:0007669"/>
    <property type="project" value="UniProtKB-SubCell"/>
</dbReference>
<dbReference type="GO" id="GO:0016020">
    <property type="term" value="C:membrane"/>
    <property type="evidence" value="ECO:0007669"/>
    <property type="project" value="UniProtKB-UniRule"/>
</dbReference>
<dbReference type="GO" id="GO:0044423">
    <property type="term" value="C:virion component"/>
    <property type="evidence" value="ECO:0007669"/>
    <property type="project" value="UniProtKB-UniRule"/>
</dbReference>
<dbReference type="GO" id="GO:0046872">
    <property type="term" value="F:metal ion binding"/>
    <property type="evidence" value="ECO:0007669"/>
    <property type="project" value="UniProtKB-KW"/>
</dbReference>
<dbReference type="GO" id="GO:0003723">
    <property type="term" value="F:RNA binding"/>
    <property type="evidence" value="ECO:0007669"/>
    <property type="project" value="UniProtKB-UniRule"/>
</dbReference>
<dbReference type="GO" id="GO:0019058">
    <property type="term" value="P:viral life cycle"/>
    <property type="evidence" value="ECO:0007669"/>
    <property type="project" value="InterPro"/>
</dbReference>
<dbReference type="HAMAP" id="MF_04081">
    <property type="entry name" value="HIV_VIF"/>
    <property type="match status" value="1"/>
</dbReference>
<dbReference type="InterPro" id="IPR000475">
    <property type="entry name" value="Vif"/>
</dbReference>
<dbReference type="Pfam" id="PF00559">
    <property type="entry name" value="Vif"/>
    <property type="match status" value="1"/>
</dbReference>
<dbReference type="PRINTS" id="PR00349">
    <property type="entry name" value="VIRIONINFFCT"/>
</dbReference>
<evidence type="ECO:0000255" key="1">
    <source>
        <dbReference type="HAMAP-Rule" id="MF_04081"/>
    </source>
</evidence>
<evidence type="ECO:0000256" key="2">
    <source>
        <dbReference type="SAM" id="MobiDB-lite"/>
    </source>
</evidence>
<gene>
    <name evidence="1" type="primary">vif</name>
</gene>
<sequence>MENRWQVMIVWQVDRMRIKTWNSLVKHHMYVSRKARNWFYRHHYESNNPKISSEVHIPLGEAKLVITTYWGLTTGERAWHLGHGVSIEWRQRSYRTQIDPDLADQLIHLYYFDCFAESAIRKAILGQIVSPRCEYPTGHNKVGSLQYLALSTLIKSKPRRPPLPSVRKLAEDRWNNSQKTRDHKGNHIMNGH</sequence>
<keyword id="KW-0014">AIDS</keyword>
<keyword id="KW-1032">Host cell membrane</keyword>
<keyword id="KW-1035">Host cytoplasm</keyword>
<keyword id="KW-1043">Host membrane</keyword>
<keyword id="KW-0945">Host-virus interaction</keyword>
<keyword id="KW-0472">Membrane</keyword>
<keyword id="KW-0479">Metal-binding</keyword>
<keyword id="KW-0597">Phosphoprotein</keyword>
<keyword id="KW-1185">Reference proteome</keyword>
<keyword id="KW-0694">RNA-binding</keyword>
<keyword id="KW-0832">Ubl conjugation</keyword>
<keyword id="KW-0833">Ubl conjugation pathway</keyword>
<keyword id="KW-0946">Virion</keyword>
<keyword id="KW-0862">Zinc</keyword>
<organism>
    <name type="scientific">Simian immunodeficiency virus (isolate MB66)</name>
    <name type="common">SIV-cpz</name>
    <name type="synonym">Chimpanzee immunodeficiency virus</name>
    <dbReference type="NCBI Taxonomy" id="388911"/>
    <lineage>
        <taxon>Viruses</taxon>
        <taxon>Riboviria</taxon>
        <taxon>Pararnavirae</taxon>
        <taxon>Artverviricota</taxon>
        <taxon>Revtraviricetes</taxon>
        <taxon>Ortervirales</taxon>
        <taxon>Retroviridae</taxon>
        <taxon>Orthoretrovirinae</taxon>
        <taxon>Lentivirus</taxon>
        <taxon>Simian immunodeficiency virus</taxon>
    </lineage>
</organism>
<comment type="function">
    <text evidence="1">Counteracts the innate antiviral activity of host APOBEC3F and APOBEC3G by promoting their ubiquitination and degradation. Acts as a substrate recognition component of an E3 ubiquitin-protein ligase complex: mechanistically, Vif hijacks a host cullin-5-RING E3 ubiquitin-protein ligase complex (ECS complex) and the transcription coactivator CBFB/CBF-beta to form an active E3 ubiquitin-protein ligase complex that targets APOBEC3G and APOBEC3F for polyubiquitination, leading to their degradation by the proteasome. Vif interaction with APOBEC3G also blocks its cytidine deaminase activity in a proteasome-independent manner, suggesting a dual inhibitory mechanism. May interact directly with APOBEC3G mRNA in order to inhibit its translation. Association with CBFB/CBF-beta also inhibits the transcription coactivator activity of CBFB/CBF-beta. Seems to play a role in viral morphology by affecting the stability of the viral nucleoprotein core. Finally, Vif also contributes to the G2 cell cycle arrest observed in SIV infected cells.</text>
</comment>
<comment type="subunit">
    <text evidence="1">Homomultimer; in vitro and presumably in vivo. Interacts with viral RNA and Pr55Gag precursor; these interactions mediate Vif incorporation into the virion. Interacts with the viral reverse transcriptase. Forms cullin-5-RING E3 ubiquitin-protein ligase complex (ECS complex) by interacting with host CUL5, RBX2, elongin BC complex (ELOB and ELOC) and CBFB/CBF-beta. Within the ECS complex, Vif interacts directly with host CUL5, ELOC and APOBEC (APOBEC3F and APOBEC3G) substrates. The ECS complex also contains some single-stranded RNA (ssRNA) that acts as a glue that bridges Vif with APOBEC (APOBEC3F and APOBEC3G) substrates. Interacts with host UBCE7IP1 isoform 3/ZIN and possibly with SAT. Interacts with host tyrosine kinases HCK and FYN; these interactions may decrease level of phosphorylated APOBEC3G incorporation into virions. Interacts with host ABCE1; this interaction may play a role in protecting viral RNA from damage during viral assembly. Interacts with host MDM2; this interaction targets Vif for degradation by the proteasome.</text>
</comment>
<comment type="subcellular location">
    <subcellularLocation>
        <location evidence="1">Host cytoplasm</location>
    </subcellularLocation>
    <subcellularLocation>
        <location evidence="1">Host cell membrane</location>
        <topology evidence="1">Peripheral membrane protein</topology>
        <orientation evidence="1">Cytoplasmic side</orientation>
    </subcellularLocation>
    <subcellularLocation>
        <location evidence="1">Virion</location>
    </subcellularLocation>
    <text evidence="1">In the cytoplasm, seems to colocalize with intermediate filament vimentin. A fraction is associated with the cytoplasmic side of cellular membranes, presumably via the interaction with Pr55Gag precursor. Incorporated in virions at a ratio of approximately 7 to 20 molecules per virion.</text>
</comment>
<comment type="induction">
    <text evidence="1">Expressed late during infection in a Rev-dependent manner.</text>
</comment>
<comment type="domain">
    <text evidence="1">The BC-like-box motif mediates the interaction with elongin BC complex.</text>
</comment>
<comment type="domain">
    <text evidence="1">The HCCH motif (H-x(5)-C-x(18)-C-x(5)-H) mediates the interaction with CUL5.</text>
</comment>
<comment type="PTM">
    <text evidence="1">Processed in virion by the viral protease.</text>
</comment>
<comment type="PTM">
    <text evidence="1">Highly phosphorylated on serine and threonine residues.</text>
</comment>
<comment type="PTM">
    <text evidence="1">Polyubiquitinated and degraded by the proteasome in the presence of APOBEC3G.</text>
</comment>
<comment type="miscellaneous">
    <text evidence="1">Vif-defective viruses show catastrophic failure in reverse transcription due to APOBEC-induced mutations that initiate a DNA base repair pathway and compromise the structural integrity of the ssDNA. In the absence of Vif, the virion is morphologically abnormal.</text>
</comment>
<comment type="miscellaneous">
    <text evidence="1">HIV-1 lineages are divided in three main groups, M (for Major), O (for Outlier), and N (for New, or Non-M, Non-O). The vast majority of strains found worldwide belong to the group M. Group O seems to be endemic to and largely confined to Cameroon and neighboring countries in West Central Africa, where these viruses represent a small minority of HIV-1 strains. The group N is represented by a limited number of isolates from Cameroonian persons. The group M is further subdivided in 9 clades or subtypes (A to D, F to H, J and K).</text>
</comment>
<comment type="miscellaneous">
    <text evidence="1">Required for replication in 'nonpermissive' cells, including primary T-cells, macrophages and certain T-cell lines, but is dispensable for replication in 'permissive' cell lines, such as 293T cells. In nonpermissive cells, Vif-defective viruses can produce virions, but they fail to complete reverse transcription and cannot successfully infect new cells.</text>
</comment>
<comment type="similarity">
    <text evidence="1">Belongs to the primate lentivirus group Vif protein family.</text>
</comment>
<proteinExistence type="inferred from homology"/>
<accession>Q1A266</accession>
<name>VIF_SIVMB</name>